<name>RS7_STRZP</name>
<protein>
    <recommendedName>
        <fullName evidence="1">Small ribosomal subunit protein uS7</fullName>
    </recommendedName>
    <alternativeName>
        <fullName evidence="2">30S ribosomal protein S7</fullName>
    </alternativeName>
</protein>
<accession>C1CIF2</accession>
<keyword id="KW-0687">Ribonucleoprotein</keyword>
<keyword id="KW-0689">Ribosomal protein</keyword>
<keyword id="KW-0694">RNA-binding</keyword>
<keyword id="KW-0699">rRNA-binding</keyword>
<keyword id="KW-0820">tRNA-binding</keyword>
<organism>
    <name type="scientific">Streptococcus pneumoniae (strain P1031)</name>
    <dbReference type="NCBI Taxonomy" id="488223"/>
    <lineage>
        <taxon>Bacteria</taxon>
        <taxon>Bacillati</taxon>
        <taxon>Bacillota</taxon>
        <taxon>Bacilli</taxon>
        <taxon>Lactobacillales</taxon>
        <taxon>Streptococcaceae</taxon>
        <taxon>Streptococcus</taxon>
    </lineage>
</organism>
<comment type="function">
    <text evidence="1">One of the primary rRNA binding proteins, it binds directly to 16S rRNA where it nucleates assembly of the head domain of the 30S subunit. Is located at the subunit interface close to the decoding center, probably blocks exit of the E-site tRNA.</text>
</comment>
<comment type="subunit">
    <text evidence="1">Part of the 30S ribosomal subunit. Contacts proteins S9 and S11.</text>
</comment>
<comment type="similarity">
    <text evidence="1">Belongs to the universal ribosomal protein uS7 family.</text>
</comment>
<dbReference type="EMBL" id="CP000920">
    <property type="protein sequence ID" value="ACO21911.1"/>
    <property type="molecule type" value="Genomic_DNA"/>
</dbReference>
<dbReference type="RefSeq" id="WP_000087873.1">
    <property type="nucleotide sequence ID" value="NC_012467.1"/>
</dbReference>
<dbReference type="SMR" id="C1CIF2"/>
<dbReference type="GeneID" id="93738576"/>
<dbReference type="KEGG" id="spp:SPP_0321"/>
<dbReference type="HOGENOM" id="CLU_072226_1_1_9"/>
<dbReference type="GO" id="GO:0015935">
    <property type="term" value="C:small ribosomal subunit"/>
    <property type="evidence" value="ECO:0007669"/>
    <property type="project" value="InterPro"/>
</dbReference>
<dbReference type="GO" id="GO:0019843">
    <property type="term" value="F:rRNA binding"/>
    <property type="evidence" value="ECO:0007669"/>
    <property type="project" value="UniProtKB-UniRule"/>
</dbReference>
<dbReference type="GO" id="GO:0003735">
    <property type="term" value="F:structural constituent of ribosome"/>
    <property type="evidence" value="ECO:0007669"/>
    <property type="project" value="InterPro"/>
</dbReference>
<dbReference type="GO" id="GO:0000049">
    <property type="term" value="F:tRNA binding"/>
    <property type="evidence" value="ECO:0007669"/>
    <property type="project" value="UniProtKB-UniRule"/>
</dbReference>
<dbReference type="GO" id="GO:0006412">
    <property type="term" value="P:translation"/>
    <property type="evidence" value="ECO:0007669"/>
    <property type="project" value="UniProtKB-UniRule"/>
</dbReference>
<dbReference type="CDD" id="cd14869">
    <property type="entry name" value="uS7_Bacteria"/>
    <property type="match status" value="1"/>
</dbReference>
<dbReference type="FunFam" id="1.10.455.10:FF:000001">
    <property type="entry name" value="30S ribosomal protein S7"/>
    <property type="match status" value="1"/>
</dbReference>
<dbReference type="Gene3D" id="1.10.455.10">
    <property type="entry name" value="Ribosomal protein S7 domain"/>
    <property type="match status" value="1"/>
</dbReference>
<dbReference type="HAMAP" id="MF_00480_B">
    <property type="entry name" value="Ribosomal_uS7_B"/>
    <property type="match status" value="1"/>
</dbReference>
<dbReference type="InterPro" id="IPR000235">
    <property type="entry name" value="Ribosomal_uS7"/>
</dbReference>
<dbReference type="InterPro" id="IPR005717">
    <property type="entry name" value="Ribosomal_uS7_bac/org-type"/>
</dbReference>
<dbReference type="InterPro" id="IPR020606">
    <property type="entry name" value="Ribosomal_uS7_CS"/>
</dbReference>
<dbReference type="InterPro" id="IPR023798">
    <property type="entry name" value="Ribosomal_uS7_dom"/>
</dbReference>
<dbReference type="InterPro" id="IPR036823">
    <property type="entry name" value="Ribosomal_uS7_dom_sf"/>
</dbReference>
<dbReference type="NCBIfam" id="TIGR01029">
    <property type="entry name" value="rpsG_bact"/>
    <property type="match status" value="1"/>
</dbReference>
<dbReference type="PANTHER" id="PTHR11205">
    <property type="entry name" value="RIBOSOMAL PROTEIN S7"/>
    <property type="match status" value="1"/>
</dbReference>
<dbReference type="Pfam" id="PF00177">
    <property type="entry name" value="Ribosomal_S7"/>
    <property type="match status" value="1"/>
</dbReference>
<dbReference type="PIRSF" id="PIRSF002122">
    <property type="entry name" value="RPS7p_RPS7a_RPS5e_RPS7o"/>
    <property type="match status" value="1"/>
</dbReference>
<dbReference type="SUPFAM" id="SSF47973">
    <property type="entry name" value="Ribosomal protein S7"/>
    <property type="match status" value="1"/>
</dbReference>
<dbReference type="PROSITE" id="PS00052">
    <property type="entry name" value="RIBOSOMAL_S7"/>
    <property type="match status" value="1"/>
</dbReference>
<evidence type="ECO:0000255" key="1">
    <source>
        <dbReference type="HAMAP-Rule" id="MF_00480"/>
    </source>
</evidence>
<evidence type="ECO:0000305" key="2"/>
<proteinExistence type="inferred from homology"/>
<gene>
    <name evidence="1" type="primary">rpsG</name>
    <name type="ordered locus">SPP_0321</name>
</gene>
<feature type="chain" id="PRO_1000135629" description="Small ribosomal subunit protein uS7">
    <location>
        <begin position="1"/>
        <end position="156"/>
    </location>
</feature>
<sequence length="156" mass="17756">MSRKNRAPKRDVLPDPLYNSQLVTRLINRVMLDGKRGTAASIVYGAFEQIKEATGNDALEVFETAMENIMPVLEVRARRVGGSNYQVPVEVRPERRTTLGLRWLVTIARLRGEHTMQDRLAKEILDAANNTGAAVKKREDTHRMAEANRAFAHFRW</sequence>
<reference key="1">
    <citation type="journal article" date="2010" name="Genome Biol.">
        <title>Structure and dynamics of the pan-genome of Streptococcus pneumoniae and closely related species.</title>
        <authorList>
            <person name="Donati C."/>
            <person name="Hiller N.L."/>
            <person name="Tettelin H."/>
            <person name="Muzzi A."/>
            <person name="Croucher N.J."/>
            <person name="Angiuoli S.V."/>
            <person name="Oggioni M."/>
            <person name="Dunning Hotopp J.C."/>
            <person name="Hu F.Z."/>
            <person name="Riley D.R."/>
            <person name="Covacci A."/>
            <person name="Mitchell T.J."/>
            <person name="Bentley S.D."/>
            <person name="Kilian M."/>
            <person name="Ehrlich G.D."/>
            <person name="Rappuoli R."/>
            <person name="Moxon E.R."/>
            <person name="Masignani V."/>
        </authorList>
    </citation>
    <scope>NUCLEOTIDE SEQUENCE [LARGE SCALE GENOMIC DNA]</scope>
    <source>
        <strain>P1031</strain>
    </source>
</reference>